<name>UNG_CAEEL</name>
<keyword id="KW-0025">Alternative splicing</keyword>
<keyword id="KW-0227">DNA damage</keyword>
<keyword id="KW-0234">DNA repair</keyword>
<keyword id="KW-0378">Hydrolase</keyword>
<keyword id="KW-0496">Mitochondrion</keyword>
<keyword id="KW-0539">Nucleus</keyword>
<keyword id="KW-1185">Reference proteome</keyword>
<gene>
    <name evidence="7" type="primary">ung-1</name>
    <name evidence="7" type="ORF">Y56A3A.29</name>
</gene>
<reference evidence="6" key="1">
    <citation type="journal article" date="1998" name="Science">
        <title>Genome sequence of the nematode C. elegans: a platform for investigating biology.</title>
        <authorList>
            <consortium name="The C. elegans sequencing consortium"/>
        </authorList>
    </citation>
    <scope>NUCLEOTIDE SEQUENCE [LARGE SCALE GENOMIC DNA]</scope>
    <source>
        <strain evidence="6">Bristol N2</strain>
    </source>
</reference>
<reference evidence="5" key="2">
    <citation type="journal article" date="2008" name="Mutagenesis">
        <title>Cloning and characterization of uracil-DNA glycosylase and the biological consequences of the loss of its function in the nematode Caenorhabditis elegans.</title>
        <authorList>
            <person name="Nakamura N."/>
            <person name="Morinaga H."/>
            <person name="Kikuchi M."/>
            <person name="Yonekura S."/>
            <person name="Ishii N."/>
            <person name="Yamamoto K."/>
            <person name="Yonei S."/>
            <person name="Zhang Q.M."/>
        </authorList>
    </citation>
    <scope>FUNCTION</scope>
    <scope>CATALYTIC ACTIVITY</scope>
    <scope>ACTIVITY REGULATION</scope>
    <scope>BIOPHYSICOCHEMICAL PROPERTIES</scope>
</reference>
<reference evidence="5" key="3">
    <citation type="journal article" date="2010" name="DNA Repair">
        <title>Loss of Caenorhabditis elegans UNG-1 uracil-DNA glycosylase affects apoptosis in response to DNA damaging agents.</title>
        <authorList>
            <person name="Skjeldam H.K."/>
            <person name="Kassahun H."/>
            <person name="Fensgaard O."/>
            <person name="SenGupta T."/>
            <person name="Babaie E."/>
            <person name="Lindvall J.M."/>
            <person name="Arczewska K."/>
            <person name="Nilsen H."/>
        </authorList>
    </citation>
    <scope>FUNCTION</scope>
    <scope>CATALYTIC ACTIVITY</scope>
    <scope>ACTIVITY REGULATION</scope>
    <scope>SUBCELLULAR LOCATION</scope>
    <scope>DISRUPTION PHENOTYPE</scope>
</reference>
<feature type="chain" id="PRO_0000436926" description="Uracil-DNA glycosylase" evidence="5">
    <location>
        <begin position="1"/>
        <end position="282"/>
    </location>
</feature>
<feature type="region of interest" description="Disordered" evidence="2">
    <location>
        <begin position="15"/>
        <end position="40"/>
    </location>
</feature>
<feature type="active site" description="Proton acceptor" evidence="1">
    <location>
        <position position="123"/>
    </location>
</feature>
<feature type="splice variant" id="VSP_058448" description="In isoform c and isoform d." evidence="5">
    <location>
        <begin position="1"/>
        <end position="44"/>
    </location>
</feature>
<feature type="splice variant" id="VSP_058449" description="In isoform b and isoform c." evidence="5">
    <original>GESWSKLLEEEFKKGYISKIEKFLNSEVNKGKQ</original>
    <variation>DRPSVSAECSQVVGMQMLLEMQHGARKFRSKPD</variation>
    <location>
        <begin position="63"/>
        <end position="95"/>
    </location>
</feature>
<feature type="splice variant" id="VSP_058450" description="In isoform b and isoform c." evidence="5">
    <location>
        <begin position="96"/>
        <end position="282"/>
    </location>
</feature>
<sequence>MSKTVRIPDMFLKASAASKRKSASNTENIPEKVPAGNENQEVKKMKLQAPEPTEILLKSLLTGESWSKLLEEEFKKGYISKIEKFLNSEVNKGKQVFPPPTQIFTTFNLLPFDEISVVIIGQDPYHDDNQAHGLSFSVQKGVKPPPSLKNIYKELESDIEGFKRPDHGNLLGWTRQGVFMLNATLTVRAHEANSHAKIGWQTFTDTVIRIISRQSEKPIVFLLWGGFAHKKEELIDTKKHVVIKTAHPSPLSARKWWGCKCFSKCNTELENSGRNPINWADL</sequence>
<comment type="function">
    <text evidence="1 3 4">Excises uracil residues from the DNA which can arise as a result of misincorporation of dUMP residues by DNA polymerase or due to deamination of cytosine.</text>
</comment>
<comment type="catalytic activity">
    <reaction evidence="1 3 4">
        <text>Hydrolyzes single-stranded DNA or mismatched double-stranded DNA and polynucleotides, releasing free uracil.</text>
        <dbReference type="EC" id="3.2.2.27"/>
    </reaction>
</comment>
<comment type="activity regulation">
    <text evidence="3 4">Inhibited by UGI, a B.subtilis bacteriophage PBS2 peptide inhibitor.</text>
</comment>
<comment type="biophysicochemical properties">
    <temperatureDependence>
        <text evidence="3">Optimum temperature is 26 degrees Celsius.</text>
    </temperatureDependence>
</comment>
<comment type="subcellular location">
    <subcellularLocation>
        <location evidence="1">Mitochondrion</location>
    </subcellularLocation>
    <subcellularLocation>
        <location evidence="1 4">Nucleus</location>
    </subcellularLocation>
</comment>
<comment type="alternative products">
    <event type="alternative splicing"/>
    <isoform>
        <id>Q9U221-1</id>
        <name evidence="7">a</name>
        <sequence type="displayed"/>
    </isoform>
    <isoform>
        <id>Q9U221-2</id>
        <name evidence="8">b</name>
        <sequence type="described" ref="VSP_058449 VSP_058450"/>
    </isoform>
    <isoform>
        <id>Q9U221-3</id>
        <name evidence="9">c</name>
        <sequence type="described" ref="VSP_058448 VSP_058449 VSP_058450"/>
    </isoform>
    <isoform>
        <id>Q9U221-4</id>
        <name evidence="10">d</name>
        <sequence type="described" ref="VSP_058448"/>
    </isoform>
</comment>
<comment type="disruption phenotype">
    <text evidence="4">Severe loss of unracil exision activity. Increased number of germ-cell corpses in response DNA damage induced by ionizing radiation.</text>
</comment>
<comment type="similarity">
    <text evidence="1">Belongs to the uracil-DNA glycosylase (UDG) superfamily. UNG family.</text>
</comment>
<proteinExistence type="evidence at protein level"/>
<dbReference type="EC" id="3.2.2.27" evidence="1 3 4"/>
<dbReference type="EMBL" id="BX284603">
    <property type="protein sequence ID" value="CAB60520.1"/>
    <property type="molecule type" value="Genomic_DNA"/>
</dbReference>
<dbReference type="EMBL" id="BX284603">
    <property type="protein sequence ID" value="CAC42381.1"/>
    <property type="molecule type" value="Genomic_DNA"/>
</dbReference>
<dbReference type="EMBL" id="BX284603">
    <property type="protein sequence ID" value="CCG28084.1"/>
    <property type="molecule type" value="Genomic_DNA"/>
</dbReference>
<dbReference type="EMBL" id="BX284603">
    <property type="protein sequence ID" value="CCG28085.1"/>
    <property type="molecule type" value="Genomic_DNA"/>
</dbReference>
<dbReference type="RefSeq" id="NP_001255148.1">
    <molecule id="Q9U221-4"/>
    <property type="nucleotide sequence ID" value="NM_001268219.3"/>
</dbReference>
<dbReference type="RefSeq" id="NP_001255149.1">
    <molecule id="Q9U221-3"/>
    <property type="nucleotide sequence ID" value="NM_001268220.3"/>
</dbReference>
<dbReference type="RefSeq" id="NP_499560.1">
    <molecule id="Q9U221-1"/>
    <property type="nucleotide sequence ID" value="NM_067159.7"/>
</dbReference>
<dbReference type="RefSeq" id="NP_499561.1">
    <molecule id="Q9U221-2"/>
    <property type="nucleotide sequence ID" value="NM_067160.7"/>
</dbReference>
<dbReference type="SMR" id="Q9U221"/>
<dbReference type="FunCoup" id="Q9U221">
    <property type="interactions" value="1171"/>
</dbReference>
<dbReference type="STRING" id="6239.Y56A3A.29a.1"/>
<dbReference type="PaxDb" id="6239-Y56A3A.29a"/>
<dbReference type="PeptideAtlas" id="Q9U221"/>
<dbReference type="EnsemblMetazoa" id="Y56A3A.29a.1">
    <molecule id="Q9U221-1"/>
    <property type="protein sequence ID" value="Y56A3A.29a.1"/>
    <property type="gene ID" value="WBGene00013241"/>
</dbReference>
<dbReference type="EnsemblMetazoa" id="Y56A3A.29b.1">
    <molecule id="Q9U221-2"/>
    <property type="protein sequence ID" value="Y56A3A.29b.1"/>
    <property type="gene ID" value="WBGene00013241"/>
</dbReference>
<dbReference type="EnsemblMetazoa" id="Y56A3A.29c.1">
    <molecule id="Q9U221-3"/>
    <property type="protein sequence ID" value="Y56A3A.29c.1"/>
    <property type="gene ID" value="WBGene00013241"/>
</dbReference>
<dbReference type="EnsemblMetazoa" id="Y56A3A.29d.1">
    <molecule id="Q9U221-4"/>
    <property type="protein sequence ID" value="Y56A3A.29d.1"/>
    <property type="gene ID" value="WBGene00013241"/>
</dbReference>
<dbReference type="GeneID" id="176633"/>
<dbReference type="KEGG" id="cel:CELE_Y56A3A.29"/>
<dbReference type="UCSC" id="Y56A3A.29a">
    <property type="organism name" value="c. elegans"/>
</dbReference>
<dbReference type="AGR" id="WB:WBGene00013241"/>
<dbReference type="CTD" id="176633"/>
<dbReference type="WormBase" id="Y56A3A.29a">
    <molecule id="Q9U221-1"/>
    <property type="protein sequence ID" value="CE22594"/>
    <property type="gene ID" value="WBGene00013241"/>
    <property type="gene designation" value="ung-1"/>
</dbReference>
<dbReference type="WormBase" id="Y56A3A.29b">
    <molecule id="Q9U221-2"/>
    <property type="protein sequence ID" value="CE28139"/>
    <property type="gene ID" value="WBGene00013241"/>
    <property type="gene designation" value="ung-1"/>
</dbReference>
<dbReference type="WormBase" id="Y56A3A.29c">
    <molecule id="Q9U221-3"/>
    <property type="protein sequence ID" value="CE47304"/>
    <property type="gene ID" value="WBGene00013241"/>
    <property type="gene designation" value="ung-1"/>
</dbReference>
<dbReference type="WormBase" id="Y56A3A.29d">
    <molecule id="Q9U221-4"/>
    <property type="protein sequence ID" value="CE47197"/>
    <property type="gene ID" value="WBGene00013241"/>
    <property type="gene designation" value="ung-1"/>
</dbReference>
<dbReference type="eggNOG" id="KOG2994">
    <property type="taxonomic scope" value="Eukaryota"/>
</dbReference>
<dbReference type="GeneTree" id="ENSGT00390000003405"/>
<dbReference type="InParanoid" id="Q9U221"/>
<dbReference type="OMA" id="PWTRQGV"/>
<dbReference type="OrthoDB" id="10031947at2759"/>
<dbReference type="PhylomeDB" id="Q9U221"/>
<dbReference type="PRO" id="PR:Q9U221"/>
<dbReference type="Proteomes" id="UP000001940">
    <property type="component" value="Chromosome III"/>
</dbReference>
<dbReference type="Bgee" id="WBGene00013241">
    <property type="expression patterns" value="Expressed in embryo and 4 other cell types or tissues"/>
</dbReference>
<dbReference type="GO" id="GO:0005739">
    <property type="term" value="C:mitochondrion"/>
    <property type="evidence" value="ECO:0000318"/>
    <property type="project" value="GO_Central"/>
</dbReference>
<dbReference type="GO" id="GO:0005634">
    <property type="term" value="C:nucleus"/>
    <property type="evidence" value="ECO:0000314"/>
    <property type="project" value="WormBase"/>
</dbReference>
<dbReference type="GO" id="GO:0004844">
    <property type="term" value="F:uracil DNA N-glycosylase activity"/>
    <property type="evidence" value="ECO:0000314"/>
    <property type="project" value="WormBase"/>
</dbReference>
<dbReference type="GO" id="GO:0006284">
    <property type="term" value="P:base-excision repair"/>
    <property type="evidence" value="ECO:0000314"/>
    <property type="project" value="WormBase"/>
</dbReference>
<dbReference type="GO" id="GO:0097510">
    <property type="term" value="P:base-excision repair, AP site formation via deaminated base removal"/>
    <property type="evidence" value="ECO:0000318"/>
    <property type="project" value="GO_Central"/>
</dbReference>
<dbReference type="CDD" id="cd10027">
    <property type="entry name" value="UDG-F1-like"/>
    <property type="match status" value="1"/>
</dbReference>
<dbReference type="FunFam" id="3.40.470.10:FF:000001">
    <property type="entry name" value="Uracil-DNA glycosylase"/>
    <property type="match status" value="1"/>
</dbReference>
<dbReference type="Gene3D" id="3.40.470.10">
    <property type="entry name" value="Uracil-DNA glycosylase-like domain"/>
    <property type="match status" value="1"/>
</dbReference>
<dbReference type="HAMAP" id="MF_00148">
    <property type="entry name" value="UDG"/>
    <property type="match status" value="1"/>
</dbReference>
<dbReference type="InterPro" id="IPR002043">
    <property type="entry name" value="UDG_fam1"/>
</dbReference>
<dbReference type="InterPro" id="IPR005122">
    <property type="entry name" value="Uracil-DNA_glycosylase-like"/>
</dbReference>
<dbReference type="InterPro" id="IPR036895">
    <property type="entry name" value="Uracil-DNA_glycosylase-like_sf"/>
</dbReference>
<dbReference type="NCBIfam" id="NF003588">
    <property type="entry name" value="PRK05254.1-1"/>
    <property type="match status" value="1"/>
</dbReference>
<dbReference type="NCBIfam" id="NF003589">
    <property type="entry name" value="PRK05254.1-2"/>
    <property type="match status" value="1"/>
</dbReference>
<dbReference type="NCBIfam" id="NF003592">
    <property type="entry name" value="PRK05254.1-5"/>
    <property type="match status" value="1"/>
</dbReference>
<dbReference type="NCBIfam" id="TIGR00628">
    <property type="entry name" value="ung"/>
    <property type="match status" value="1"/>
</dbReference>
<dbReference type="PANTHER" id="PTHR11264">
    <property type="entry name" value="URACIL-DNA GLYCOSYLASE"/>
    <property type="match status" value="1"/>
</dbReference>
<dbReference type="PANTHER" id="PTHR11264:SF7">
    <property type="entry name" value="URACIL-DNA GLYCOSYLASE"/>
    <property type="match status" value="1"/>
</dbReference>
<dbReference type="Pfam" id="PF03167">
    <property type="entry name" value="UDG"/>
    <property type="match status" value="1"/>
</dbReference>
<dbReference type="SMART" id="SM00986">
    <property type="entry name" value="UDG"/>
    <property type="match status" value="1"/>
</dbReference>
<dbReference type="SMART" id="SM00987">
    <property type="entry name" value="UreE_C"/>
    <property type="match status" value="1"/>
</dbReference>
<dbReference type="SUPFAM" id="SSF52141">
    <property type="entry name" value="Uracil-DNA glycosylase-like"/>
    <property type="match status" value="1"/>
</dbReference>
<evidence type="ECO:0000255" key="1">
    <source>
        <dbReference type="HAMAP-Rule" id="MF_03166"/>
    </source>
</evidence>
<evidence type="ECO:0000256" key="2">
    <source>
        <dbReference type="SAM" id="MobiDB-lite"/>
    </source>
</evidence>
<evidence type="ECO:0000269" key="3">
    <source>
    </source>
</evidence>
<evidence type="ECO:0000269" key="4">
    <source>
    </source>
</evidence>
<evidence type="ECO:0000305" key="5"/>
<evidence type="ECO:0000312" key="6">
    <source>
        <dbReference type="Proteomes" id="UP000001940"/>
    </source>
</evidence>
<evidence type="ECO:0000312" key="7">
    <source>
        <dbReference type="WormBase" id="Y56A3A.29a"/>
    </source>
</evidence>
<evidence type="ECO:0000312" key="8">
    <source>
        <dbReference type="WormBase" id="Y56A3A.29b"/>
    </source>
</evidence>
<evidence type="ECO:0000312" key="9">
    <source>
        <dbReference type="WormBase" id="Y56A3A.29c"/>
    </source>
</evidence>
<evidence type="ECO:0000312" key="10">
    <source>
        <dbReference type="WormBase" id="Y56A3A.29d"/>
    </source>
</evidence>
<organism evidence="6">
    <name type="scientific">Caenorhabditis elegans</name>
    <dbReference type="NCBI Taxonomy" id="6239"/>
    <lineage>
        <taxon>Eukaryota</taxon>
        <taxon>Metazoa</taxon>
        <taxon>Ecdysozoa</taxon>
        <taxon>Nematoda</taxon>
        <taxon>Chromadorea</taxon>
        <taxon>Rhabditida</taxon>
        <taxon>Rhabditina</taxon>
        <taxon>Rhabditomorpha</taxon>
        <taxon>Rhabditoidea</taxon>
        <taxon>Rhabditidae</taxon>
        <taxon>Peloderinae</taxon>
        <taxon>Caenorhabditis</taxon>
    </lineage>
</organism>
<protein>
    <recommendedName>
        <fullName evidence="1">Uracil-DNA glycosylase</fullName>
        <shortName evidence="1">UDG</shortName>
        <ecNumber evidence="1 3 4">3.2.2.27</ecNumber>
    </recommendedName>
</protein>
<accession>Q9U221</accession>
<accession>H8ESG8</accession>
<accession>H8ESG9</accession>
<accession>Q95Q13</accession>